<accession>B9EKX1</accession>
<gene>
    <name type="primary">Ptchd4</name>
</gene>
<keyword id="KW-0325">Glycoprotein</keyword>
<keyword id="KW-0472">Membrane</keyword>
<keyword id="KW-1185">Reference proteome</keyword>
<keyword id="KW-0812">Transmembrane</keyword>
<keyword id="KW-1133">Transmembrane helix</keyword>
<name>PTHD4_MOUSE</name>
<sequence length="904" mass="103115">MCFLRRPGAPASWIWWRMLRQVLRRGLQSFCHRLGLCVSRHPVFFLTVPAVLTITFGLSALNRFQTEGDLERLVAPSHSLAKIERSLASSLFPLDQSKSQLYSDLHTPGRYGRVILLSSPGDNILLQAEGILQTHRAVMEMKVNHKGYNYTFSHLCVLRNQDKKCVLDDIISVLEDLRQAAVSNKTTARVQVRYPNTKLKDGRNSFIGHQLGGVVEVPNSKDQRVKSARAIQITYYLQTYGSATQDLIGEKWENEFCKLMRKLQEEHQDLQLYSLASFSLWRDFHKTSILTRSKVLVSLVLILTTATLSSSMKDCLRSKPFLGLLGVLTVCISIATAAGIFFITDGKYNSTLLGIPFFAMGHGTKGVFELLSGWRRTKENLPFKDRVADAYSDVMVTYTMTSSLYFITFGMGASPFTNIEAVKIFCQNMCVSILLNYFYIFSFFGSCLVFAGQLEQNRYHSIFCCKIPSAEYLDRKPVWFQTVMSDGHQQTSHHETNPYQHHFIQHFLREHYNEWITNIYVKPFVVILYLIYASFSFMGCLQISDGASIINLLASDSPSVSYAMVQQKYFSNYSPVIGFYVYEPLEYWNSSVQEDLQRLCSGFTAVSWVEQYYQFLKTSNISANNKTDFISVLQSSFLKKPEFQHFRNDIIFSRAGDENNIIASRLYLVARTSRDKQKEVIEVLDKLRPLSLSKSIRFIVFNPSFVFTDHYSLSVTVPVLIAGFGVLLVLILTFFLVIHPLGNFWLILSVTSIELGVLGLMTLWNVDMDCISILCLIYTLNFAIDHCAPLLYTFVLATEHTRTQCIKSSLQEHGTAILQNITSFLIGLLPLLFVPSNLTFTLFKCLLLTGGCTLLHCFVILPVFLTFFPPSKKHHKKKKRAKRKEREEIECIEIQENPDHVTTV</sequence>
<proteinExistence type="evidence at transcript level"/>
<reference key="1">
    <citation type="journal article" date="2004" name="Genome Res.">
        <title>The status, quality, and expansion of the NIH full-length cDNA project: the Mammalian Gene Collection (MGC).</title>
        <authorList>
            <consortium name="The MGC Project Team"/>
        </authorList>
    </citation>
    <scope>NUCLEOTIDE SEQUENCE [LARGE SCALE MRNA]</scope>
    <source>
        <tissue>Brain</tissue>
    </source>
</reference>
<organism>
    <name type="scientific">Mus musculus</name>
    <name type="common">Mouse</name>
    <dbReference type="NCBI Taxonomy" id="10090"/>
    <lineage>
        <taxon>Eukaryota</taxon>
        <taxon>Metazoa</taxon>
        <taxon>Chordata</taxon>
        <taxon>Craniata</taxon>
        <taxon>Vertebrata</taxon>
        <taxon>Euteleostomi</taxon>
        <taxon>Mammalia</taxon>
        <taxon>Eutheria</taxon>
        <taxon>Euarchontoglires</taxon>
        <taxon>Glires</taxon>
        <taxon>Rodentia</taxon>
        <taxon>Myomorpha</taxon>
        <taxon>Muroidea</taxon>
        <taxon>Muridae</taxon>
        <taxon>Murinae</taxon>
        <taxon>Mus</taxon>
        <taxon>Mus</taxon>
    </lineage>
</organism>
<feature type="chain" id="PRO_0000389444" description="Patched domain-containing protein 4">
    <location>
        <begin position="1"/>
        <end position="904"/>
    </location>
</feature>
<feature type="transmembrane region" description="Helical" evidence="2">
    <location>
        <begin position="41"/>
        <end position="61"/>
    </location>
</feature>
<feature type="transmembrane region" description="Helical" evidence="2">
    <location>
        <begin position="295"/>
        <end position="312"/>
    </location>
</feature>
<feature type="transmembrane region" description="Helical" evidence="2">
    <location>
        <begin position="323"/>
        <end position="343"/>
    </location>
</feature>
<feature type="transmembrane region" description="Helical" evidence="2">
    <location>
        <begin position="351"/>
        <end position="371"/>
    </location>
</feature>
<feature type="transmembrane region" description="Helical" evidence="2">
    <location>
        <begin position="394"/>
        <end position="414"/>
    </location>
</feature>
<feature type="transmembrane region" description="Helical" evidence="2">
    <location>
        <begin position="431"/>
        <end position="451"/>
    </location>
</feature>
<feature type="transmembrane region" description="Helical" evidence="2">
    <location>
        <begin position="523"/>
        <end position="543"/>
    </location>
</feature>
<feature type="transmembrane region" description="Helical" evidence="2">
    <location>
        <begin position="718"/>
        <end position="738"/>
    </location>
</feature>
<feature type="transmembrane region" description="Helical" evidence="2">
    <location>
        <begin position="744"/>
        <end position="764"/>
    </location>
</feature>
<feature type="transmembrane region" description="Helical" evidence="2">
    <location>
        <begin position="771"/>
        <end position="791"/>
    </location>
</feature>
<feature type="transmembrane region" description="Helical" evidence="2">
    <location>
        <begin position="823"/>
        <end position="843"/>
    </location>
</feature>
<feature type="transmembrane region" description="Helical" evidence="2">
    <location>
        <begin position="845"/>
        <end position="865"/>
    </location>
</feature>
<feature type="domain" description="SSD" evidence="3">
    <location>
        <begin position="291"/>
        <end position="450"/>
    </location>
</feature>
<feature type="glycosylation site" description="N-linked (GlcNAc...) asparagine" evidence="2">
    <location>
        <position position="149"/>
    </location>
</feature>
<feature type="glycosylation site" description="N-linked (GlcNAc...) asparagine" evidence="2">
    <location>
        <position position="625"/>
    </location>
</feature>
<feature type="glycosylation site" description="N-linked (GlcNAc...) asparagine" evidence="2">
    <location>
        <position position="820"/>
    </location>
</feature>
<evidence type="ECO:0000250" key="1">
    <source>
        <dbReference type="UniProtKB" id="Q6ZW05"/>
    </source>
</evidence>
<evidence type="ECO:0000255" key="2"/>
<evidence type="ECO:0000255" key="3">
    <source>
        <dbReference type="PROSITE-ProRule" id="PRU00199"/>
    </source>
</evidence>
<evidence type="ECO:0000305" key="4"/>
<protein>
    <recommendedName>
        <fullName>Patched domain-containing protein 4</fullName>
    </recommendedName>
</protein>
<dbReference type="EMBL" id="BC151166">
    <property type="protein sequence ID" value="AAI51167.1"/>
    <property type="status" value="ALT_INIT"/>
    <property type="molecule type" value="mRNA"/>
</dbReference>
<dbReference type="CCDS" id="CCDS89098.1"/>
<dbReference type="RefSeq" id="NP_001342199.1">
    <property type="nucleotide sequence ID" value="NM_001355270.1"/>
</dbReference>
<dbReference type="RefSeq" id="XP_006524814.1">
    <property type="nucleotide sequence ID" value="XM_006524751.1"/>
</dbReference>
<dbReference type="RefSeq" id="XP_006524815.1">
    <property type="nucleotide sequence ID" value="XM_006524752.2"/>
</dbReference>
<dbReference type="RefSeq" id="XP_036016614.1">
    <property type="nucleotide sequence ID" value="XM_036160721.1"/>
</dbReference>
<dbReference type="SMR" id="B9EKX1"/>
<dbReference type="BioGRID" id="553632">
    <property type="interactions" value="2"/>
</dbReference>
<dbReference type="FunCoup" id="B9EKX1">
    <property type="interactions" value="438"/>
</dbReference>
<dbReference type="STRING" id="10090.ENSMUSP00000047640"/>
<dbReference type="GlyCosmos" id="B9EKX1">
    <property type="glycosylation" value="3 sites, No reported glycans"/>
</dbReference>
<dbReference type="GlyGen" id="B9EKX1">
    <property type="glycosylation" value="3 sites, 1 N-linked glycan (1 site)"/>
</dbReference>
<dbReference type="iPTMnet" id="B9EKX1"/>
<dbReference type="PhosphoSitePlus" id="B9EKX1"/>
<dbReference type="PaxDb" id="10090-ENSMUSP00000047640"/>
<dbReference type="ProteomicsDB" id="302009"/>
<dbReference type="Antibodypedia" id="48920">
    <property type="antibodies" value="97 antibodies from 18 providers"/>
</dbReference>
<dbReference type="Ensembl" id="ENSMUST00000232968.2">
    <property type="protein sequence ID" value="ENSMUSP00000156770.2"/>
    <property type="gene ID" value="ENSMUSG00000042256.6"/>
</dbReference>
<dbReference type="GeneID" id="627626"/>
<dbReference type="AGR" id="MGI:1920485"/>
<dbReference type="CTD" id="442213"/>
<dbReference type="MGI" id="MGI:1920485">
    <property type="gene designation" value="Ptchd4"/>
</dbReference>
<dbReference type="VEuPathDB" id="HostDB:ENSMUSG00000042256"/>
<dbReference type="eggNOG" id="KOG1934">
    <property type="taxonomic scope" value="Eukaryota"/>
</dbReference>
<dbReference type="GeneTree" id="ENSGT00940000156827"/>
<dbReference type="InParanoid" id="B9EKX1"/>
<dbReference type="OrthoDB" id="10027883at2759"/>
<dbReference type="PhylomeDB" id="B9EKX1"/>
<dbReference type="BioGRID-ORCS" id="627626">
    <property type="hits" value="6 hits in 76 CRISPR screens"/>
</dbReference>
<dbReference type="ChiTaRS" id="Ptchd4">
    <property type="organism name" value="mouse"/>
</dbReference>
<dbReference type="PRO" id="PR:B9EKX1"/>
<dbReference type="Proteomes" id="UP000000589">
    <property type="component" value="Chromosome 17"/>
</dbReference>
<dbReference type="RNAct" id="B9EKX1">
    <property type="molecule type" value="protein"/>
</dbReference>
<dbReference type="Bgee" id="ENSMUSG00000042256">
    <property type="expression patterns" value="Expressed in lumbar subsegment of spinal cord and 93 other cell types or tissues"/>
</dbReference>
<dbReference type="ExpressionAtlas" id="B9EKX1">
    <property type="expression patterns" value="baseline and differential"/>
</dbReference>
<dbReference type="GO" id="GO:0016020">
    <property type="term" value="C:membrane"/>
    <property type="evidence" value="ECO:0007669"/>
    <property type="project" value="UniProtKB-SubCell"/>
</dbReference>
<dbReference type="Gene3D" id="1.20.1640.10">
    <property type="entry name" value="Multidrug efflux transporter AcrB transmembrane domain"/>
    <property type="match status" value="2"/>
</dbReference>
<dbReference type="InterPro" id="IPR051697">
    <property type="entry name" value="Patched_domain-protein"/>
</dbReference>
<dbReference type="InterPro" id="IPR003392">
    <property type="entry name" value="PTHD_SSD"/>
</dbReference>
<dbReference type="InterPro" id="IPR000731">
    <property type="entry name" value="SSD"/>
</dbReference>
<dbReference type="PANTHER" id="PTHR10796:SF15">
    <property type="entry name" value="PATCHED DOMAIN-CONTAINING PROTEIN 4"/>
    <property type="match status" value="1"/>
</dbReference>
<dbReference type="PANTHER" id="PTHR10796">
    <property type="entry name" value="PATCHED-RELATED"/>
    <property type="match status" value="1"/>
</dbReference>
<dbReference type="Pfam" id="PF02460">
    <property type="entry name" value="Patched"/>
    <property type="match status" value="1"/>
</dbReference>
<dbReference type="SUPFAM" id="SSF82866">
    <property type="entry name" value="Multidrug efflux transporter AcrB transmembrane domain"/>
    <property type="match status" value="2"/>
</dbReference>
<dbReference type="PROSITE" id="PS50156">
    <property type="entry name" value="SSD"/>
    <property type="match status" value="1"/>
</dbReference>
<comment type="function">
    <text evidence="1">Could act as a repressor of canonical hedgehog signaling by antagonizing the effects of SMO, as suggested by down-regulation of hedgehog target genes, including GLI1, PTCH1, and PTCH2 in PTCHD4-expressing cells.</text>
</comment>
<comment type="subcellular location">
    <subcellularLocation>
        <location evidence="4">Membrane</location>
        <topology evidence="4">Multi-pass membrane protein</topology>
    </subcellularLocation>
</comment>
<comment type="similarity">
    <text evidence="4">Belongs to the patched family.</text>
</comment>
<comment type="sequence caution" evidence="4">
    <conflict type="erroneous initiation">
        <sequence resource="EMBL-CDS" id="AAI51167"/>
    </conflict>
</comment>